<feature type="chain" id="PRO_0000184814" description="3-methyl-2-oxobutanoate hydroxymethyltransferase">
    <location>
        <begin position="1"/>
        <end position="279"/>
    </location>
</feature>
<feature type="active site" description="Proton acceptor" evidence="1">
    <location>
        <position position="181"/>
    </location>
</feature>
<feature type="binding site" evidence="1">
    <location>
        <begin position="43"/>
        <end position="44"/>
    </location>
    <ligand>
        <name>3-methyl-2-oxobutanoate</name>
        <dbReference type="ChEBI" id="CHEBI:11851"/>
    </ligand>
</feature>
<feature type="binding site" evidence="1">
    <location>
        <position position="43"/>
    </location>
    <ligand>
        <name>Mg(2+)</name>
        <dbReference type="ChEBI" id="CHEBI:18420"/>
    </ligand>
</feature>
<feature type="binding site" evidence="1">
    <location>
        <position position="82"/>
    </location>
    <ligand>
        <name>3-methyl-2-oxobutanoate</name>
        <dbReference type="ChEBI" id="CHEBI:11851"/>
    </ligand>
</feature>
<feature type="binding site" evidence="1">
    <location>
        <position position="82"/>
    </location>
    <ligand>
        <name>Mg(2+)</name>
        <dbReference type="ChEBI" id="CHEBI:18420"/>
    </ligand>
</feature>
<feature type="binding site" evidence="1">
    <location>
        <position position="112"/>
    </location>
    <ligand>
        <name>3-methyl-2-oxobutanoate</name>
        <dbReference type="ChEBI" id="CHEBI:11851"/>
    </ligand>
</feature>
<feature type="binding site" evidence="1">
    <location>
        <position position="114"/>
    </location>
    <ligand>
        <name>Mg(2+)</name>
        <dbReference type="ChEBI" id="CHEBI:18420"/>
    </ligand>
</feature>
<protein>
    <recommendedName>
        <fullName evidence="1">3-methyl-2-oxobutanoate hydroxymethyltransferase</fullName>
        <ecNumber evidence="1">2.1.2.11</ecNumber>
    </recommendedName>
    <alternativeName>
        <fullName evidence="1">Ketopantoate hydroxymethyltransferase</fullName>
        <shortName evidence="1">KPHMT</shortName>
    </alternativeName>
</protein>
<name>PANB_BACHK</name>
<evidence type="ECO:0000255" key="1">
    <source>
        <dbReference type="HAMAP-Rule" id="MF_00156"/>
    </source>
</evidence>
<gene>
    <name evidence="1" type="primary">panB</name>
    <name type="ordered locus">BT9727_1421</name>
</gene>
<accession>Q6HL16</accession>
<sequence length="279" mass="30535">MKTKTDFLKMKEQGEPITMLTAYDYPSAKLAEEAEVDMILVGDSLGMVVLGYDSTVPVTVEDMIHHTKAVRRGAKETFIVTDMPFMSYHVSLQDTMVNARRIVQESGAHALKVEGAGEVISTIHYLTNAGIPVVAHLGLTPQSVGVLGGYKVQGKDAESAKKLIEDAKKCEEAGAIALVLECVPMQLAELISEQLTIPTIGIGAGQKVDGQVLVYHDLISYGVNRVPKFVKQYTSVQEEIVRGISQYVAEVKTRQFPEEKHSFTMKEEECLALYGGKQS</sequence>
<organism>
    <name type="scientific">Bacillus thuringiensis subsp. konkukian (strain 97-27)</name>
    <dbReference type="NCBI Taxonomy" id="281309"/>
    <lineage>
        <taxon>Bacteria</taxon>
        <taxon>Bacillati</taxon>
        <taxon>Bacillota</taxon>
        <taxon>Bacilli</taxon>
        <taxon>Bacillales</taxon>
        <taxon>Bacillaceae</taxon>
        <taxon>Bacillus</taxon>
        <taxon>Bacillus cereus group</taxon>
    </lineage>
</organism>
<proteinExistence type="inferred from homology"/>
<reference key="1">
    <citation type="journal article" date="2006" name="J. Bacteriol.">
        <title>Pathogenomic sequence analysis of Bacillus cereus and Bacillus thuringiensis isolates closely related to Bacillus anthracis.</title>
        <authorList>
            <person name="Han C.S."/>
            <person name="Xie G."/>
            <person name="Challacombe J.F."/>
            <person name="Altherr M.R."/>
            <person name="Bhotika S.S."/>
            <person name="Bruce D."/>
            <person name="Campbell C.S."/>
            <person name="Campbell M.L."/>
            <person name="Chen J."/>
            <person name="Chertkov O."/>
            <person name="Cleland C."/>
            <person name="Dimitrijevic M."/>
            <person name="Doggett N.A."/>
            <person name="Fawcett J.J."/>
            <person name="Glavina T."/>
            <person name="Goodwin L.A."/>
            <person name="Hill K.K."/>
            <person name="Hitchcock P."/>
            <person name="Jackson P.J."/>
            <person name="Keim P."/>
            <person name="Kewalramani A.R."/>
            <person name="Longmire J."/>
            <person name="Lucas S."/>
            <person name="Malfatti S."/>
            <person name="McMurry K."/>
            <person name="Meincke L.J."/>
            <person name="Misra M."/>
            <person name="Moseman B.L."/>
            <person name="Mundt M."/>
            <person name="Munk A.C."/>
            <person name="Okinaka R.T."/>
            <person name="Parson-Quintana B."/>
            <person name="Reilly L.P."/>
            <person name="Richardson P."/>
            <person name="Robinson D.L."/>
            <person name="Rubin E."/>
            <person name="Saunders E."/>
            <person name="Tapia R."/>
            <person name="Tesmer J.G."/>
            <person name="Thayer N."/>
            <person name="Thompson L.S."/>
            <person name="Tice H."/>
            <person name="Ticknor L.O."/>
            <person name="Wills P.L."/>
            <person name="Brettin T.S."/>
            <person name="Gilna P."/>
        </authorList>
    </citation>
    <scope>NUCLEOTIDE SEQUENCE [LARGE SCALE GENOMIC DNA]</scope>
    <source>
        <strain>97-27</strain>
    </source>
</reference>
<keyword id="KW-0963">Cytoplasm</keyword>
<keyword id="KW-0460">Magnesium</keyword>
<keyword id="KW-0479">Metal-binding</keyword>
<keyword id="KW-0566">Pantothenate biosynthesis</keyword>
<keyword id="KW-0808">Transferase</keyword>
<comment type="function">
    <text evidence="1">Catalyzes the reversible reaction in which hydroxymethyl group from 5,10-methylenetetrahydrofolate is transferred onto alpha-ketoisovalerate to form ketopantoate.</text>
</comment>
<comment type="catalytic activity">
    <reaction evidence="1">
        <text>3-methyl-2-oxobutanoate + (6R)-5,10-methylene-5,6,7,8-tetrahydrofolate + H2O = 2-dehydropantoate + (6S)-5,6,7,8-tetrahydrofolate</text>
        <dbReference type="Rhea" id="RHEA:11824"/>
        <dbReference type="ChEBI" id="CHEBI:11561"/>
        <dbReference type="ChEBI" id="CHEBI:11851"/>
        <dbReference type="ChEBI" id="CHEBI:15377"/>
        <dbReference type="ChEBI" id="CHEBI:15636"/>
        <dbReference type="ChEBI" id="CHEBI:57453"/>
        <dbReference type="EC" id="2.1.2.11"/>
    </reaction>
</comment>
<comment type="cofactor">
    <cofactor evidence="1">
        <name>Mg(2+)</name>
        <dbReference type="ChEBI" id="CHEBI:18420"/>
    </cofactor>
    <text evidence="1">Binds 1 Mg(2+) ion per subunit.</text>
</comment>
<comment type="pathway">
    <text evidence="1">Cofactor biosynthesis; (R)-pantothenate biosynthesis; (R)-pantoate from 3-methyl-2-oxobutanoate: step 1/2.</text>
</comment>
<comment type="subunit">
    <text evidence="1">Homodecamer; pentamer of dimers.</text>
</comment>
<comment type="subcellular location">
    <subcellularLocation>
        <location evidence="1">Cytoplasm</location>
    </subcellularLocation>
</comment>
<comment type="similarity">
    <text evidence="1">Belongs to the PanB family.</text>
</comment>
<dbReference type="EC" id="2.1.2.11" evidence="1"/>
<dbReference type="EMBL" id="AE017355">
    <property type="protein sequence ID" value="AAT59464.1"/>
    <property type="molecule type" value="Genomic_DNA"/>
</dbReference>
<dbReference type="RefSeq" id="WP_000851103.1">
    <property type="nucleotide sequence ID" value="NC_005957.1"/>
</dbReference>
<dbReference type="RefSeq" id="YP_035755.1">
    <property type="nucleotide sequence ID" value="NC_005957.1"/>
</dbReference>
<dbReference type="SMR" id="Q6HL16"/>
<dbReference type="GeneID" id="45021534"/>
<dbReference type="KEGG" id="btk:BT9727_1421"/>
<dbReference type="PATRIC" id="fig|281309.8.peg.1493"/>
<dbReference type="HOGENOM" id="CLU_036645_1_0_9"/>
<dbReference type="UniPathway" id="UPA00028">
    <property type="reaction ID" value="UER00003"/>
</dbReference>
<dbReference type="Proteomes" id="UP000001301">
    <property type="component" value="Chromosome"/>
</dbReference>
<dbReference type="GO" id="GO:0005737">
    <property type="term" value="C:cytoplasm"/>
    <property type="evidence" value="ECO:0007669"/>
    <property type="project" value="UniProtKB-SubCell"/>
</dbReference>
<dbReference type="GO" id="GO:0003864">
    <property type="term" value="F:3-methyl-2-oxobutanoate hydroxymethyltransferase activity"/>
    <property type="evidence" value="ECO:0007669"/>
    <property type="project" value="UniProtKB-UniRule"/>
</dbReference>
<dbReference type="GO" id="GO:0000287">
    <property type="term" value="F:magnesium ion binding"/>
    <property type="evidence" value="ECO:0007669"/>
    <property type="project" value="TreeGrafter"/>
</dbReference>
<dbReference type="GO" id="GO:0015940">
    <property type="term" value="P:pantothenate biosynthetic process"/>
    <property type="evidence" value="ECO:0007669"/>
    <property type="project" value="UniProtKB-UniRule"/>
</dbReference>
<dbReference type="CDD" id="cd06557">
    <property type="entry name" value="KPHMT-like"/>
    <property type="match status" value="1"/>
</dbReference>
<dbReference type="FunFam" id="3.20.20.60:FF:000003">
    <property type="entry name" value="3-methyl-2-oxobutanoate hydroxymethyltransferase"/>
    <property type="match status" value="1"/>
</dbReference>
<dbReference type="Gene3D" id="3.20.20.60">
    <property type="entry name" value="Phosphoenolpyruvate-binding domains"/>
    <property type="match status" value="1"/>
</dbReference>
<dbReference type="HAMAP" id="MF_00156">
    <property type="entry name" value="PanB"/>
    <property type="match status" value="1"/>
</dbReference>
<dbReference type="InterPro" id="IPR003700">
    <property type="entry name" value="Pantoate_hydroxy_MeTrfase"/>
</dbReference>
<dbReference type="InterPro" id="IPR015813">
    <property type="entry name" value="Pyrv/PenolPyrv_kinase-like_dom"/>
</dbReference>
<dbReference type="InterPro" id="IPR040442">
    <property type="entry name" value="Pyrv_kinase-like_dom_sf"/>
</dbReference>
<dbReference type="NCBIfam" id="TIGR00222">
    <property type="entry name" value="panB"/>
    <property type="match status" value="1"/>
</dbReference>
<dbReference type="NCBIfam" id="NF001452">
    <property type="entry name" value="PRK00311.1"/>
    <property type="match status" value="1"/>
</dbReference>
<dbReference type="PANTHER" id="PTHR20881">
    <property type="entry name" value="3-METHYL-2-OXOBUTANOATE HYDROXYMETHYLTRANSFERASE"/>
    <property type="match status" value="1"/>
</dbReference>
<dbReference type="PANTHER" id="PTHR20881:SF0">
    <property type="entry name" value="3-METHYL-2-OXOBUTANOATE HYDROXYMETHYLTRANSFERASE"/>
    <property type="match status" value="1"/>
</dbReference>
<dbReference type="Pfam" id="PF02548">
    <property type="entry name" value="Pantoate_transf"/>
    <property type="match status" value="1"/>
</dbReference>
<dbReference type="PIRSF" id="PIRSF000388">
    <property type="entry name" value="Pantoate_hydroxy_MeTrfase"/>
    <property type="match status" value="1"/>
</dbReference>
<dbReference type="SUPFAM" id="SSF51621">
    <property type="entry name" value="Phosphoenolpyruvate/pyruvate domain"/>
    <property type="match status" value="1"/>
</dbReference>